<keyword id="KW-0963">Cytoplasm</keyword>
<keyword id="KW-0269">Exonuclease</keyword>
<keyword id="KW-0378">Hydrolase</keyword>
<keyword id="KW-0540">Nuclease</keyword>
<keyword id="KW-1185">Reference proteome</keyword>
<sequence length="181" mass="20788">MAADETNLIWVDLEMTGLEPEVDRIIEIATIVTDKELNILAEGPVIAIHQSEDVLAAMDDWNQKHHGESGLIDRVRASDFSEQDAIEQTIAFLSEHVPAGVSPMCGNSIGQDRRFLNRYMPTLEDYFHYRNIDVSSVKELVRRWRPEVMDGFKKQGTHQALVDIQESIAELRYYREKVFKI</sequence>
<comment type="function">
    <text evidence="1">3'-to-5' exoribonuclease specific for small oligoribonucleotides.</text>
</comment>
<comment type="subcellular location">
    <subcellularLocation>
        <location evidence="1">Cytoplasm</location>
    </subcellularLocation>
</comment>
<comment type="similarity">
    <text evidence="1">Belongs to the oligoribonuclease family.</text>
</comment>
<proteinExistence type="inferred from homology"/>
<reference key="1">
    <citation type="submission" date="2007-03" db="EMBL/GenBank/DDBJ databases">
        <title>Complete sequence of Shewanella loihica PV-4.</title>
        <authorList>
            <consortium name="US DOE Joint Genome Institute"/>
            <person name="Copeland A."/>
            <person name="Lucas S."/>
            <person name="Lapidus A."/>
            <person name="Barry K."/>
            <person name="Detter J.C."/>
            <person name="Glavina del Rio T."/>
            <person name="Hammon N."/>
            <person name="Israni S."/>
            <person name="Dalin E."/>
            <person name="Tice H."/>
            <person name="Pitluck S."/>
            <person name="Chain P."/>
            <person name="Malfatti S."/>
            <person name="Shin M."/>
            <person name="Vergez L."/>
            <person name="Schmutz J."/>
            <person name="Larimer F."/>
            <person name="Land M."/>
            <person name="Hauser L."/>
            <person name="Kyrpides N."/>
            <person name="Mikhailova N."/>
            <person name="Romine M.F."/>
            <person name="Serres G."/>
            <person name="Fredrickson J."/>
            <person name="Tiedje J."/>
            <person name="Richardson P."/>
        </authorList>
    </citation>
    <scope>NUCLEOTIDE SEQUENCE [LARGE SCALE GENOMIC DNA]</scope>
    <source>
        <strain>ATCC BAA-1088 / PV-4</strain>
    </source>
</reference>
<evidence type="ECO:0000255" key="1">
    <source>
        <dbReference type="HAMAP-Rule" id="MF_00045"/>
    </source>
</evidence>
<protein>
    <recommendedName>
        <fullName evidence="1">Oligoribonuclease</fullName>
        <ecNumber evidence="1">3.1.15.-</ecNumber>
    </recommendedName>
</protein>
<gene>
    <name evidence="1" type="primary">orn</name>
    <name type="ordered locus">Shew_0559</name>
</gene>
<feature type="chain" id="PRO_1000004287" description="Oligoribonuclease">
    <location>
        <begin position="1"/>
        <end position="181"/>
    </location>
</feature>
<feature type="domain" description="Exonuclease" evidence="1">
    <location>
        <begin position="8"/>
        <end position="171"/>
    </location>
</feature>
<feature type="active site" evidence="1">
    <location>
        <position position="129"/>
    </location>
</feature>
<organism>
    <name type="scientific">Shewanella loihica (strain ATCC BAA-1088 / PV-4)</name>
    <dbReference type="NCBI Taxonomy" id="323850"/>
    <lineage>
        <taxon>Bacteria</taxon>
        <taxon>Pseudomonadati</taxon>
        <taxon>Pseudomonadota</taxon>
        <taxon>Gammaproteobacteria</taxon>
        <taxon>Alteromonadales</taxon>
        <taxon>Shewanellaceae</taxon>
        <taxon>Shewanella</taxon>
    </lineage>
</organism>
<accession>A3QAD3</accession>
<name>ORN_SHELP</name>
<dbReference type="EC" id="3.1.15.-" evidence="1"/>
<dbReference type="EMBL" id="CP000606">
    <property type="protein sequence ID" value="ABO22431.1"/>
    <property type="molecule type" value="Genomic_DNA"/>
</dbReference>
<dbReference type="RefSeq" id="WP_011864365.1">
    <property type="nucleotide sequence ID" value="NC_009092.1"/>
</dbReference>
<dbReference type="SMR" id="A3QAD3"/>
<dbReference type="STRING" id="323850.Shew_0559"/>
<dbReference type="KEGG" id="slo:Shew_0559"/>
<dbReference type="eggNOG" id="COG1949">
    <property type="taxonomic scope" value="Bacteria"/>
</dbReference>
<dbReference type="HOGENOM" id="CLU_064761_2_0_6"/>
<dbReference type="OrthoDB" id="9801329at2"/>
<dbReference type="Proteomes" id="UP000001558">
    <property type="component" value="Chromosome"/>
</dbReference>
<dbReference type="GO" id="GO:0005737">
    <property type="term" value="C:cytoplasm"/>
    <property type="evidence" value="ECO:0007669"/>
    <property type="project" value="UniProtKB-SubCell"/>
</dbReference>
<dbReference type="GO" id="GO:0000175">
    <property type="term" value="F:3'-5'-RNA exonuclease activity"/>
    <property type="evidence" value="ECO:0007669"/>
    <property type="project" value="InterPro"/>
</dbReference>
<dbReference type="GO" id="GO:0003676">
    <property type="term" value="F:nucleic acid binding"/>
    <property type="evidence" value="ECO:0007669"/>
    <property type="project" value="InterPro"/>
</dbReference>
<dbReference type="GO" id="GO:0006259">
    <property type="term" value="P:DNA metabolic process"/>
    <property type="evidence" value="ECO:0007669"/>
    <property type="project" value="UniProtKB-ARBA"/>
</dbReference>
<dbReference type="CDD" id="cd06135">
    <property type="entry name" value="Orn"/>
    <property type="match status" value="1"/>
</dbReference>
<dbReference type="FunFam" id="3.30.420.10:FF:000003">
    <property type="entry name" value="Oligoribonuclease"/>
    <property type="match status" value="1"/>
</dbReference>
<dbReference type="Gene3D" id="3.30.420.10">
    <property type="entry name" value="Ribonuclease H-like superfamily/Ribonuclease H"/>
    <property type="match status" value="1"/>
</dbReference>
<dbReference type="HAMAP" id="MF_00045">
    <property type="entry name" value="Oligoribonuclease"/>
    <property type="match status" value="1"/>
</dbReference>
<dbReference type="InterPro" id="IPR013520">
    <property type="entry name" value="Exonuclease_RNaseT/DNA_pol3"/>
</dbReference>
<dbReference type="InterPro" id="IPR022894">
    <property type="entry name" value="Oligoribonuclease"/>
</dbReference>
<dbReference type="InterPro" id="IPR012337">
    <property type="entry name" value="RNaseH-like_sf"/>
</dbReference>
<dbReference type="InterPro" id="IPR036397">
    <property type="entry name" value="RNaseH_sf"/>
</dbReference>
<dbReference type="NCBIfam" id="NF003765">
    <property type="entry name" value="PRK05359.1"/>
    <property type="match status" value="1"/>
</dbReference>
<dbReference type="PANTHER" id="PTHR11046">
    <property type="entry name" value="OLIGORIBONUCLEASE, MITOCHONDRIAL"/>
    <property type="match status" value="1"/>
</dbReference>
<dbReference type="PANTHER" id="PTHR11046:SF0">
    <property type="entry name" value="OLIGORIBONUCLEASE, MITOCHONDRIAL"/>
    <property type="match status" value="1"/>
</dbReference>
<dbReference type="Pfam" id="PF00929">
    <property type="entry name" value="RNase_T"/>
    <property type="match status" value="1"/>
</dbReference>
<dbReference type="SMART" id="SM00479">
    <property type="entry name" value="EXOIII"/>
    <property type="match status" value="1"/>
</dbReference>
<dbReference type="SUPFAM" id="SSF53098">
    <property type="entry name" value="Ribonuclease H-like"/>
    <property type="match status" value="1"/>
</dbReference>